<keyword id="KW-0001">2Fe-2S</keyword>
<keyword id="KW-0004">4Fe-4S</keyword>
<keyword id="KW-0093">Biotin biosynthesis</keyword>
<keyword id="KW-0408">Iron</keyword>
<keyword id="KW-0411">Iron-sulfur</keyword>
<keyword id="KW-0479">Metal-binding</keyword>
<keyword id="KW-1185">Reference proteome</keyword>
<keyword id="KW-0949">S-adenosyl-L-methionine</keyword>
<keyword id="KW-0808">Transferase</keyword>
<name>BIOB_BURMA</name>
<protein>
    <recommendedName>
        <fullName evidence="1">Biotin synthase</fullName>
        <ecNumber evidence="1">2.8.1.6</ecNumber>
    </recommendedName>
</protein>
<comment type="function">
    <text evidence="1">Catalyzes the conversion of dethiobiotin (DTB) to biotin by the insertion of a sulfur atom into dethiobiotin via a radical-based mechanism.</text>
</comment>
<comment type="catalytic activity">
    <reaction evidence="1">
        <text>(4R,5S)-dethiobiotin + (sulfur carrier)-SH + 2 reduced [2Fe-2S]-[ferredoxin] + 2 S-adenosyl-L-methionine = (sulfur carrier)-H + biotin + 2 5'-deoxyadenosine + 2 L-methionine + 2 oxidized [2Fe-2S]-[ferredoxin]</text>
        <dbReference type="Rhea" id="RHEA:22060"/>
        <dbReference type="Rhea" id="RHEA-COMP:10000"/>
        <dbReference type="Rhea" id="RHEA-COMP:10001"/>
        <dbReference type="Rhea" id="RHEA-COMP:14737"/>
        <dbReference type="Rhea" id="RHEA-COMP:14739"/>
        <dbReference type="ChEBI" id="CHEBI:17319"/>
        <dbReference type="ChEBI" id="CHEBI:29917"/>
        <dbReference type="ChEBI" id="CHEBI:33737"/>
        <dbReference type="ChEBI" id="CHEBI:33738"/>
        <dbReference type="ChEBI" id="CHEBI:57586"/>
        <dbReference type="ChEBI" id="CHEBI:57844"/>
        <dbReference type="ChEBI" id="CHEBI:59789"/>
        <dbReference type="ChEBI" id="CHEBI:64428"/>
        <dbReference type="ChEBI" id="CHEBI:149473"/>
        <dbReference type="EC" id="2.8.1.6"/>
    </reaction>
</comment>
<comment type="cofactor">
    <cofactor evidence="1">
        <name>[4Fe-4S] cluster</name>
        <dbReference type="ChEBI" id="CHEBI:49883"/>
    </cofactor>
    <text evidence="1">Binds 1 [4Fe-4S] cluster. The cluster is coordinated with 3 cysteines and an exchangeable S-adenosyl-L-methionine.</text>
</comment>
<comment type="cofactor">
    <cofactor evidence="1">
        <name>[2Fe-2S] cluster</name>
        <dbReference type="ChEBI" id="CHEBI:190135"/>
    </cofactor>
    <text evidence="1">Binds 1 [2Fe-2S] cluster. The cluster is coordinated with 3 cysteines and 1 arginine.</text>
</comment>
<comment type="pathway">
    <text evidence="1">Cofactor biosynthesis; biotin biosynthesis; biotin from 7,8-diaminononanoate: step 2/2.</text>
</comment>
<comment type="subunit">
    <text evidence="1">Homodimer.</text>
</comment>
<comment type="similarity">
    <text evidence="1">Belongs to the radical SAM superfamily. Biotin synthase family.</text>
</comment>
<comment type="sequence caution" evidence="3">
    <conflict type="erroneous initiation">
        <sequence resource="EMBL-CDS" id="AAU48657"/>
    </conflict>
</comment>
<reference key="1">
    <citation type="journal article" date="2004" name="Proc. Natl. Acad. Sci. U.S.A.">
        <title>Structural flexibility in the Burkholderia mallei genome.</title>
        <authorList>
            <person name="Nierman W.C."/>
            <person name="DeShazer D."/>
            <person name="Kim H.S."/>
            <person name="Tettelin H."/>
            <person name="Nelson K.E."/>
            <person name="Feldblyum T.V."/>
            <person name="Ulrich R.L."/>
            <person name="Ronning C.M."/>
            <person name="Brinkac L.M."/>
            <person name="Daugherty S.C."/>
            <person name="Davidsen T.D."/>
            <person name="DeBoy R.T."/>
            <person name="Dimitrov G."/>
            <person name="Dodson R.J."/>
            <person name="Durkin A.S."/>
            <person name="Gwinn M.L."/>
            <person name="Haft D.H."/>
            <person name="Khouri H.M."/>
            <person name="Kolonay J.F."/>
            <person name="Madupu R."/>
            <person name="Mohammoud Y."/>
            <person name="Nelson W.C."/>
            <person name="Radune D."/>
            <person name="Romero C.M."/>
            <person name="Sarria S."/>
            <person name="Selengut J."/>
            <person name="Shamblin C."/>
            <person name="Sullivan S.A."/>
            <person name="White O."/>
            <person name="Yu Y."/>
            <person name="Zafar N."/>
            <person name="Zhou L."/>
            <person name="Fraser C.M."/>
        </authorList>
    </citation>
    <scope>NUCLEOTIDE SEQUENCE [LARGE SCALE GENOMIC DNA]</scope>
    <source>
        <strain>ATCC 23344</strain>
    </source>
</reference>
<evidence type="ECO:0000255" key="1">
    <source>
        <dbReference type="HAMAP-Rule" id="MF_01694"/>
    </source>
</evidence>
<evidence type="ECO:0000255" key="2">
    <source>
        <dbReference type="PROSITE-ProRule" id="PRU01266"/>
    </source>
</evidence>
<evidence type="ECO:0000305" key="3"/>
<proteinExistence type="inferred from homology"/>
<dbReference type="EC" id="2.8.1.6" evidence="1"/>
<dbReference type="EMBL" id="CP000010">
    <property type="protein sequence ID" value="AAU48657.1"/>
    <property type="status" value="ALT_INIT"/>
    <property type="molecule type" value="Genomic_DNA"/>
</dbReference>
<dbReference type="RefSeq" id="WP_004200336.1">
    <property type="nucleotide sequence ID" value="NC_006348.1"/>
</dbReference>
<dbReference type="RefSeq" id="YP_101948.1">
    <property type="nucleotide sequence ID" value="NC_006348.1"/>
</dbReference>
<dbReference type="SMR" id="Q62MW9"/>
<dbReference type="GeneID" id="93058882"/>
<dbReference type="KEGG" id="bma:BMA0103"/>
<dbReference type="PATRIC" id="fig|243160.12.peg.102"/>
<dbReference type="eggNOG" id="COG0502">
    <property type="taxonomic scope" value="Bacteria"/>
</dbReference>
<dbReference type="HOGENOM" id="CLU_033172_1_2_4"/>
<dbReference type="UniPathway" id="UPA00078">
    <property type="reaction ID" value="UER00162"/>
</dbReference>
<dbReference type="Proteomes" id="UP000006693">
    <property type="component" value="Chromosome 1"/>
</dbReference>
<dbReference type="GO" id="GO:0051537">
    <property type="term" value="F:2 iron, 2 sulfur cluster binding"/>
    <property type="evidence" value="ECO:0007669"/>
    <property type="project" value="UniProtKB-KW"/>
</dbReference>
<dbReference type="GO" id="GO:0051539">
    <property type="term" value="F:4 iron, 4 sulfur cluster binding"/>
    <property type="evidence" value="ECO:0007669"/>
    <property type="project" value="UniProtKB-KW"/>
</dbReference>
<dbReference type="GO" id="GO:0004076">
    <property type="term" value="F:biotin synthase activity"/>
    <property type="evidence" value="ECO:0007669"/>
    <property type="project" value="UniProtKB-UniRule"/>
</dbReference>
<dbReference type="GO" id="GO:0005506">
    <property type="term" value="F:iron ion binding"/>
    <property type="evidence" value="ECO:0007669"/>
    <property type="project" value="UniProtKB-UniRule"/>
</dbReference>
<dbReference type="GO" id="GO:0009102">
    <property type="term" value="P:biotin biosynthetic process"/>
    <property type="evidence" value="ECO:0007669"/>
    <property type="project" value="UniProtKB-UniRule"/>
</dbReference>
<dbReference type="CDD" id="cd01335">
    <property type="entry name" value="Radical_SAM"/>
    <property type="match status" value="1"/>
</dbReference>
<dbReference type="FunFam" id="3.20.20.70:FF:000011">
    <property type="entry name" value="Biotin synthase"/>
    <property type="match status" value="1"/>
</dbReference>
<dbReference type="Gene3D" id="3.20.20.70">
    <property type="entry name" value="Aldolase class I"/>
    <property type="match status" value="1"/>
</dbReference>
<dbReference type="HAMAP" id="MF_01694">
    <property type="entry name" value="BioB"/>
    <property type="match status" value="1"/>
</dbReference>
<dbReference type="InterPro" id="IPR013785">
    <property type="entry name" value="Aldolase_TIM"/>
</dbReference>
<dbReference type="InterPro" id="IPR010722">
    <property type="entry name" value="BATS_dom"/>
</dbReference>
<dbReference type="InterPro" id="IPR002684">
    <property type="entry name" value="Biotin_synth/BioAB"/>
</dbReference>
<dbReference type="InterPro" id="IPR024177">
    <property type="entry name" value="Biotin_synthase"/>
</dbReference>
<dbReference type="InterPro" id="IPR006638">
    <property type="entry name" value="Elp3/MiaA/NifB-like_rSAM"/>
</dbReference>
<dbReference type="InterPro" id="IPR007197">
    <property type="entry name" value="rSAM"/>
</dbReference>
<dbReference type="NCBIfam" id="TIGR00433">
    <property type="entry name" value="bioB"/>
    <property type="match status" value="1"/>
</dbReference>
<dbReference type="PANTHER" id="PTHR22976">
    <property type="entry name" value="BIOTIN SYNTHASE"/>
    <property type="match status" value="1"/>
</dbReference>
<dbReference type="PANTHER" id="PTHR22976:SF2">
    <property type="entry name" value="BIOTIN SYNTHASE, MITOCHONDRIAL"/>
    <property type="match status" value="1"/>
</dbReference>
<dbReference type="Pfam" id="PF06968">
    <property type="entry name" value="BATS"/>
    <property type="match status" value="1"/>
</dbReference>
<dbReference type="Pfam" id="PF04055">
    <property type="entry name" value="Radical_SAM"/>
    <property type="match status" value="1"/>
</dbReference>
<dbReference type="PIRSF" id="PIRSF001619">
    <property type="entry name" value="Biotin_synth"/>
    <property type="match status" value="1"/>
</dbReference>
<dbReference type="SFLD" id="SFLDF00272">
    <property type="entry name" value="biotin_synthase"/>
    <property type="match status" value="1"/>
</dbReference>
<dbReference type="SFLD" id="SFLDS00029">
    <property type="entry name" value="Radical_SAM"/>
    <property type="match status" value="1"/>
</dbReference>
<dbReference type="SMART" id="SM00876">
    <property type="entry name" value="BATS"/>
    <property type="match status" value="1"/>
</dbReference>
<dbReference type="SMART" id="SM00729">
    <property type="entry name" value="Elp3"/>
    <property type="match status" value="1"/>
</dbReference>
<dbReference type="SUPFAM" id="SSF102114">
    <property type="entry name" value="Radical SAM enzymes"/>
    <property type="match status" value="1"/>
</dbReference>
<dbReference type="PROSITE" id="PS51918">
    <property type="entry name" value="RADICAL_SAM"/>
    <property type="match status" value="1"/>
</dbReference>
<feature type="chain" id="PRO_0000381267" description="Biotin synthase">
    <location>
        <begin position="1"/>
        <end position="336"/>
    </location>
</feature>
<feature type="domain" description="Radical SAM core" evidence="2">
    <location>
        <begin position="54"/>
        <end position="281"/>
    </location>
</feature>
<feature type="binding site" evidence="1">
    <location>
        <position position="69"/>
    </location>
    <ligand>
        <name>[4Fe-4S] cluster</name>
        <dbReference type="ChEBI" id="CHEBI:49883"/>
        <note>4Fe-4S-S-AdoMet</note>
    </ligand>
</feature>
<feature type="binding site" evidence="1">
    <location>
        <position position="73"/>
    </location>
    <ligand>
        <name>[4Fe-4S] cluster</name>
        <dbReference type="ChEBI" id="CHEBI:49883"/>
        <note>4Fe-4S-S-AdoMet</note>
    </ligand>
</feature>
<feature type="binding site" evidence="1">
    <location>
        <position position="76"/>
    </location>
    <ligand>
        <name>[4Fe-4S] cluster</name>
        <dbReference type="ChEBI" id="CHEBI:49883"/>
        <note>4Fe-4S-S-AdoMet</note>
    </ligand>
</feature>
<feature type="binding site" evidence="1">
    <location>
        <position position="113"/>
    </location>
    <ligand>
        <name>[2Fe-2S] cluster</name>
        <dbReference type="ChEBI" id="CHEBI:190135"/>
    </ligand>
</feature>
<feature type="binding site" evidence="1">
    <location>
        <position position="144"/>
    </location>
    <ligand>
        <name>[2Fe-2S] cluster</name>
        <dbReference type="ChEBI" id="CHEBI:190135"/>
    </ligand>
</feature>
<feature type="binding site" evidence="1">
    <location>
        <position position="204"/>
    </location>
    <ligand>
        <name>[2Fe-2S] cluster</name>
        <dbReference type="ChEBI" id="CHEBI:190135"/>
    </ligand>
</feature>
<feature type="binding site" evidence="1">
    <location>
        <position position="276"/>
    </location>
    <ligand>
        <name>[2Fe-2S] cluster</name>
        <dbReference type="ChEBI" id="CHEBI:190135"/>
    </ligand>
</feature>
<sequence length="336" mass="36668">MTEAQTACATTETPVAAPAAPRWRVADVIALYELPFNDLLFRAQQTHREHFDANAIQLSTLLSIKTGGCEEDCGYCSQSAHHDTGLKAEKLMEVDAVLAAARTAKENGATRFCMGAAWRNPKDRHIEPIKEMIRGVKDMGLETCVTLGMLEEHQAKALAEAGLDYYNHNLDTSPEFYGQIISTRTYQDRLDTLERVRDAGINVCCGGIIGMGESRRERAGLIAQLANMNPYPESVPINNLVAIEGTPLENAQALDPFEFVRTIAVARITMPKAMVRLSAGREQLDDAMQALCFLAGANSMFYGDVLLTTGNPRAEADRKLLARLGMSASEASQLSA</sequence>
<organism>
    <name type="scientific">Burkholderia mallei (strain ATCC 23344)</name>
    <dbReference type="NCBI Taxonomy" id="243160"/>
    <lineage>
        <taxon>Bacteria</taxon>
        <taxon>Pseudomonadati</taxon>
        <taxon>Pseudomonadota</taxon>
        <taxon>Betaproteobacteria</taxon>
        <taxon>Burkholderiales</taxon>
        <taxon>Burkholderiaceae</taxon>
        <taxon>Burkholderia</taxon>
        <taxon>pseudomallei group</taxon>
    </lineage>
</organism>
<accession>Q62MW9</accession>
<gene>
    <name evidence="1" type="primary">bioB</name>
    <name type="ordered locus">BMA0103</name>
</gene>